<name>MRAY_TRIV2</name>
<reference key="1">
    <citation type="journal article" date="2014" name="Stand. Genomic Sci.">
        <title>Complete genome sequence of Anabaena variabilis ATCC 29413.</title>
        <authorList>
            <person name="Thiel T."/>
            <person name="Pratte B.S."/>
            <person name="Zhong J."/>
            <person name="Goodwin L."/>
            <person name="Copeland A."/>
            <person name="Lucas S."/>
            <person name="Han C."/>
            <person name="Pitluck S."/>
            <person name="Land M.L."/>
            <person name="Kyrpides N.C."/>
            <person name="Woyke T."/>
        </authorList>
    </citation>
    <scope>NUCLEOTIDE SEQUENCE [LARGE SCALE GENOMIC DNA]</scope>
    <source>
        <strain>ATCC 29413 / PCC 7937</strain>
    </source>
</reference>
<keyword id="KW-0131">Cell cycle</keyword>
<keyword id="KW-0132">Cell division</keyword>
<keyword id="KW-0997">Cell inner membrane</keyword>
<keyword id="KW-1003">Cell membrane</keyword>
<keyword id="KW-0133">Cell shape</keyword>
<keyword id="KW-0961">Cell wall biogenesis/degradation</keyword>
<keyword id="KW-0460">Magnesium</keyword>
<keyword id="KW-0472">Membrane</keyword>
<keyword id="KW-0479">Metal-binding</keyword>
<keyword id="KW-0573">Peptidoglycan synthesis</keyword>
<keyword id="KW-0808">Transferase</keyword>
<keyword id="KW-0812">Transmembrane</keyword>
<keyword id="KW-1133">Transmembrane helix</keyword>
<proteinExistence type="inferred from homology"/>
<sequence>MDAKLSPNQGLNISGIGLASSLAAGLGIAALTLDWIANRNPWQGTSLTLPLLLCTIASAIAGYFVVPLLQALKTGQIIREDGPQAHLKKAGTPTMGGIFFIPVAVVGACVLSNFATEVLAVSALTLSYGLIGWIDDWQILRRKSNKGISPRMKLALQICFAAAFCLWLMFNQPANITSIALPWVSFALPLGFLFWPLAGFVLVAESNATNLTDGIDGLAGGTVAIALLALGAIVAPTSPALMVFCAALSGSCLGFLAHNRNPARVFMGDTGSLALGGALAAVALLTNSLVALFILSGIFFVETLSVMAQVSYYKATKGPDGKGKRLLKMAPLHHHLELSGWSELQVVSSFYVIATILAVICLAIAPF</sequence>
<organism>
    <name type="scientific">Trichormus variabilis (strain ATCC 29413 / PCC 7937)</name>
    <name type="common">Anabaena variabilis</name>
    <dbReference type="NCBI Taxonomy" id="240292"/>
    <lineage>
        <taxon>Bacteria</taxon>
        <taxon>Bacillati</taxon>
        <taxon>Cyanobacteriota</taxon>
        <taxon>Cyanophyceae</taxon>
        <taxon>Nostocales</taxon>
        <taxon>Nostocaceae</taxon>
        <taxon>Trichormus</taxon>
    </lineage>
</organism>
<comment type="function">
    <text evidence="1">Catalyzes the initial step of the lipid cycle reactions in the biosynthesis of the cell wall peptidoglycan: transfers peptidoglycan precursor phospho-MurNAc-pentapeptide from UDP-MurNAc-pentapeptide onto the lipid carrier undecaprenyl phosphate, yielding undecaprenyl-pyrophosphoryl-MurNAc-pentapeptide, known as lipid I.</text>
</comment>
<comment type="catalytic activity">
    <reaction evidence="1">
        <text>UDP-N-acetyl-alpha-D-muramoyl-L-alanyl-gamma-D-glutamyl-meso-2,6-diaminopimeloyl-D-alanyl-D-alanine + di-trans,octa-cis-undecaprenyl phosphate = di-trans,octa-cis-undecaprenyl diphospho-N-acetyl-alpha-D-muramoyl-L-alanyl-D-glutamyl-meso-2,6-diaminopimeloyl-D-alanyl-D-alanine + UMP</text>
        <dbReference type="Rhea" id="RHEA:28386"/>
        <dbReference type="ChEBI" id="CHEBI:57865"/>
        <dbReference type="ChEBI" id="CHEBI:60392"/>
        <dbReference type="ChEBI" id="CHEBI:61386"/>
        <dbReference type="ChEBI" id="CHEBI:61387"/>
        <dbReference type="EC" id="2.7.8.13"/>
    </reaction>
</comment>
<comment type="cofactor">
    <cofactor evidence="1">
        <name>Mg(2+)</name>
        <dbReference type="ChEBI" id="CHEBI:18420"/>
    </cofactor>
</comment>
<comment type="pathway">
    <text evidence="1">Cell wall biogenesis; peptidoglycan biosynthesis.</text>
</comment>
<comment type="subcellular location">
    <subcellularLocation>
        <location evidence="1">Cell inner membrane</location>
        <topology evidence="1">Multi-pass membrane protein</topology>
    </subcellularLocation>
</comment>
<comment type="similarity">
    <text evidence="1">Belongs to the glycosyltransferase 4 family. MraY subfamily.</text>
</comment>
<protein>
    <recommendedName>
        <fullName evidence="1">Phospho-N-acetylmuramoyl-pentapeptide-transferase</fullName>
        <ecNumber evidence="1">2.7.8.13</ecNumber>
    </recommendedName>
    <alternativeName>
        <fullName evidence="1">UDP-MurNAc-pentapeptide phosphotransferase</fullName>
    </alternativeName>
</protein>
<accession>Q3MDP5</accession>
<feature type="chain" id="PRO_0000235435" description="Phospho-N-acetylmuramoyl-pentapeptide-transferase">
    <location>
        <begin position="1"/>
        <end position="367"/>
    </location>
</feature>
<feature type="transmembrane region" description="Helical" evidence="1">
    <location>
        <begin position="13"/>
        <end position="33"/>
    </location>
</feature>
<feature type="transmembrane region" description="Helical" evidence="1">
    <location>
        <begin position="49"/>
        <end position="69"/>
    </location>
</feature>
<feature type="transmembrane region" description="Helical" evidence="1">
    <location>
        <begin position="95"/>
        <end position="115"/>
    </location>
</feature>
<feature type="transmembrane region" description="Helical" evidence="1">
    <location>
        <begin position="119"/>
        <end position="139"/>
    </location>
</feature>
<feature type="transmembrane region" description="Helical" evidence="1">
    <location>
        <begin position="154"/>
        <end position="174"/>
    </location>
</feature>
<feature type="transmembrane region" description="Helical" evidence="1">
    <location>
        <begin position="183"/>
        <end position="203"/>
    </location>
</feature>
<feature type="transmembrane region" description="Helical" evidence="1">
    <location>
        <begin position="215"/>
        <end position="235"/>
    </location>
</feature>
<feature type="transmembrane region" description="Helical" evidence="1">
    <location>
        <begin position="237"/>
        <end position="257"/>
    </location>
</feature>
<feature type="transmembrane region" description="Helical" evidence="1">
    <location>
        <begin position="281"/>
        <end position="301"/>
    </location>
</feature>
<feature type="transmembrane region" description="Helical" evidence="1">
    <location>
        <begin position="347"/>
        <end position="367"/>
    </location>
</feature>
<evidence type="ECO:0000255" key="1">
    <source>
        <dbReference type="HAMAP-Rule" id="MF_00038"/>
    </source>
</evidence>
<gene>
    <name evidence="1" type="primary">mraY</name>
    <name type="ordered locus">Ava_1267</name>
</gene>
<dbReference type="EC" id="2.7.8.13" evidence="1"/>
<dbReference type="EMBL" id="CP000117">
    <property type="protein sequence ID" value="ABA20891.1"/>
    <property type="molecule type" value="Genomic_DNA"/>
</dbReference>
<dbReference type="SMR" id="Q3MDP5"/>
<dbReference type="STRING" id="240292.Ava_1267"/>
<dbReference type="KEGG" id="ava:Ava_1267"/>
<dbReference type="eggNOG" id="COG0472">
    <property type="taxonomic scope" value="Bacteria"/>
</dbReference>
<dbReference type="HOGENOM" id="CLU_023982_0_2_3"/>
<dbReference type="UniPathway" id="UPA00219"/>
<dbReference type="Proteomes" id="UP000002533">
    <property type="component" value="Chromosome"/>
</dbReference>
<dbReference type="GO" id="GO:0005886">
    <property type="term" value="C:plasma membrane"/>
    <property type="evidence" value="ECO:0007669"/>
    <property type="project" value="UniProtKB-SubCell"/>
</dbReference>
<dbReference type="GO" id="GO:0046872">
    <property type="term" value="F:metal ion binding"/>
    <property type="evidence" value="ECO:0007669"/>
    <property type="project" value="UniProtKB-KW"/>
</dbReference>
<dbReference type="GO" id="GO:0008963">
    <property type="term" value="F:phospho-N-acetylmuramoyl-pentapeptide-transferase activity"/>
    <property type="evidence" value="ECO:0007669"/>
    <property type="project" value="UniProtKB-UniRule"/>
</dbReference>
<dbReference type="GO" id="GO:0051992">
    <property type="term" value="F:UDP-N-acetylmuramoyl-L-alanyl-D-glutamyl-meso-2,6-diaminopimelyl-D-alanyl-D-alanine:undecaprenyl-phosphate transferase activity"/>
    <property type="evidence" value="ECO:0007669"/>
    <property type="project" value="RHEA"/>
</dbReference>
<dbReference type="GO" id="GO:0051301">
    <property type="term" value="P:cell division"/>
    <property type="evidence" value="ECO:0007669"/>
    <property type="project" value="UniProtKB-KW"/>
</dbReference>
<dbReference type="GO" id="GO:0071555">
    <property type="term" value="P:cell wall organization"/>
    <property type="evidence" value="ECO:0007669"/>
    <property type="project" value="UniProtKB-KW"/>
</dbReference>
<dbReference type="GO" id="GO:0009252">
    <property type="term" value="P:peptidoglycan biosynthetic process"/>
    <property type="evidence" value="ECO:0007669"/>
    <property type="project" value="UniProtKB-UniRule"/>
</dbReference>
<dbReference type="GO" id="GO:0008360">
    <property type="term" value="P:regulation of cell shape"/>
    <property type="evidence" value="ECO:0007669"/>
    <property type="project" value="UniProtKB-KW"/>
</dbReference>
<dbReference type="CDD" id="cd06852">
    <property type="entry name" value="GT_MraY"/>
    <property type="match status" value="1"/>
</dbReference>
<dbReference type="HAMAP" id="MF_00038">
    <property type="entry name" value="MraY"/>
    <property type="match status" value="1"/>
</dbReference>
<dbReference type="InterPro" id="IPR000715">
    <property type="entry name" value="Glycosyl_transferase_4"/>
</dbReference>
<dbReference type="InterPro" id="IPR003524">
    <property type="entry name" value="PNAcMuramoyl-5peptid_Trfase"/>
</dbReference>
<dbReference type="InterPro" id="IPR018480">
    <property type="entry name" value="PNAcMuramoyl-5peptid_Trfase_CS"/>
</dbReference>
<dbReference type="NCBIfam" id="TIGR00445">
    <property type="entry name" value="mraY"/>
    <property type="match status" value="1"/>
</dbReference>
<dbReference type="PANTHER" id="PTHR22926">
    <property type="entry name" value="PHOSPHO-N-ACETYLMURAMOYL-PENTAPEPTIDE-TRANSFERASE"/>
    <property type="match status" value="1"/>
</dbReference>
<dbReference type="PANTHER" id="PTHR22926:SF5">
    <property type="entry name" value="PHOSPHO-N-ACETYLMURAMOYL-PENTAPEPTIDE-TRANSFERASE HOMOLOG"/>
    <property type="match status" value="1"/>
</dbReference>
<dbReference type="Pfam" id="PF00953">
    <property type="entry name" value="Glycos_transf_4"/>
    <property type="match status" value="1"/>
</dbReference>
<dbReference type="Pfam" id="PF10555">
    <property type="entry name" value="MraY_sig1"/>
    <property type="match status" value="1"/>
</dbReference>
<dbReference type="PROSITE" id="PS01347">
    <property type="entry name" value="MRAY_1"/>
    <property type="match status" value="1"/>
</dbReference>
<dbReference type="PROSITE" id="PS01348">
    <property type="entry name" value="MRAY_2"/>
    <property type="match status" value="1"/>
</dbReference>